<sequence>MAAPILFWHRRDLRLSDNIGLAAARAQSAQLIGLFCLDPQILQSADMAPARVAYLQGCLQELQQRYQQAGSRLLLLQGDPQHLIPQLAQQLQAEAVYWNQDIEPYGRDRDGQVAAALKTAGIRAVQLWDQLLHSPDQILSGSGNPYSVYGPFWKNWQAQPKPTPVATPTELVDLSPEQLTAIAPLLLSELPTLKQLGFDWDGGFPVEPGETAAIARLQEFCDRAIADYDPQRNFPAEAGTSGLSPALKFGAIGIRQAWRAASAAHALSRSDEARNSIRVWQQELAWREFYQHALYHFPSLADGPYRSLWQQFPWENREALFTAWTQAQTGYPIVDAAMRQLTETGWMHNRCWMIVASFLTKDLIIDWRRGEQFFMQHLVDGDLAANNGGWQWSASSGMDPKPLRIFNPASQAKKFDATATYIKRWLPELRHVHPKDLISGEITPIGRRGYPAPIVNHNLRQKQFKALYNQLKAAIAEPEAEPDS</sequence>
<keyword id="KW-0002">3D-structure</keyword>
<keyword id="KW-0157">Chromophore</keyword>
<keyword id="KW-0903">Direct protein sequencing</keyword>
<keyword id="KW-0227">DNA damage</keyword>
<keyword id="KW-0234">DNA repair</keyword>
<keyword id="KW-0238">DNA-binding</keyword>
<keyword id="KW-0274">FAD</keyword>
<keyword id="KW-0285">Flavoprotein</keyword>
<keyword id="KW-0456">Lyase</keyword>
<keyword id="KW-0547">Nucleotide-binding</keyword>
<name>PHR_SYNP6</name>
<gene>
    <name type="primary">phr</name>
    <name type="synonym">phrA</name>
    <name type="ordered locus">syc1392_c</name>
</gene>
<comment type="function">
    <text>Involved in repair of UV radiation-induced DNA damage. Catalyzes the light-dependent monomerization (300-600 nm) of cyclobutyl pyrimidine dimers (in cis-syn configuration), which are formed between adjacent bases on the same DNA strand upon exposure to ultraviolet radiation.</text>
</comment>
<comment type="catalytic activity">
    <reaction>
        <text>cyclobutadipyrimidine (in DNA) = 2 pyrimidine residues (in DNA).</text>
        <dbReference type="EC" id="4.1.99.3"/>
    </reaction>
</comment>
<comment type="cofactor">
    <cofactor>
        <name>FAD</name>
        <dbReference type="ChEBI" id="CHEBI:57692"/>
    </cofactor>
    <text>Binds 1 FAD per subunit.</text>
</comment>
<comment type="cofactor">
    <cofactor>
        <name>coenzyme F420-(gamma-Glu)n</name>
        <dbReference type="ChEBI" id="CHEBI:133980"/>
    </cofactor>
    <text>Binds 1 coenzyme F420 non-covalently per subunit.</text>
</comment>
<comment type="biophysicochemical properties">
    <absorption>
        <max>440 nm</max>
    </absorption>
</comment>
<comment type="subunit">
    <text evidence="2 3 5">Monomer.</text>
</comment>
<comment type="similarity">
    <text evidence="6">Belongs to the DNA photolyase class-1 family.</text>
</comment>
<evidence type="ECO:0000250" key="1"/>
<evidence type="ECO:0000269" key="2">
    <source>
    </source>
</evidence>
<evidence type="ECO:0000269" key="3">
    <source>
    </source>
</evidence>
<evidence type="ECO:0000269" key="4">
    <source>
    </source>
</evidence>
<evidence type="ECO:0000269" key="5">
    <source>
    </source>
</evidence>
<evidence type="ECO:0000305" key="6"/>
<evidence type="ECO:0007829" key="7">
    <source>
        <dbReference type="PDB" id="1OWL"/>
    </source>
</evidence>
<organism>
    <name type="scientific">Synechococcus sp. (strain ATCC 27144 / PCC 6301 / SAUG 1402/1)</name>
    <name type="common">Anacystis nidulans</name>
    <dbReference type="NCBI Taxonomy" id="269084"/>
    <lineage>
        <taxon>Bacteria</taxon>
        <taxon>Bacillati</taxon>
        <taxon>Cyanobacteriota</taxon>
        <taxon>Cyanophyceae</taxon>
        <taxon>Synechococcales</taxon>
        <taxon>Synechococcaceae</taxon>
        <taxon>Synechococcus</taxon>
    </lineage>
</organism>
<proteinExistence type="evidence at protein level"/>
<accession>P05327</accession>
<accession>Q5N288</accession>
<feature type="initiator methionine" description="Removed" evidence="4">
    <location>
        <position position="1"/>
    </location>
</feature>
<feature type="chain" id="PRO_0000085112" description="Deoxyribodipyrimidine photo-lyase">
    <location>
        <begin position="2"/>
        <end position="484"/>
    </location>
</feature>
<feature type="domain" description="Photolyase/cryptochrome alpha/beta">
    <location>
        <begin position="3"/>
        <end position="132"/>
    </location>
</feature>
<feature type="region of interest" description="DNA-binding">
    <location>
        <begin position="141"/>
        <end position="148"/>
    </location>
</feature>
<feature type="region of interest" description="Interaction with DNA">
    <location>
        <begin position="283"/>
        <end position="290"/>
    </location>
</feature>
<feature type="region of interest" description="Interaction with DNA">
    <location>
        <begin position="349"/>
        <end position="350"/>
    </location>
</feature>
<feature type="binding site">
    <location>
        <begin position="36"/>
        <end position="38"/>
    </location>
    <ligand>
        <name>coenzyme F420-(gamma-Glu)n</name>
        <dbReference type="ChEBI" id="CHEBI:133980"/>
    </ligand>
</feature>
<feature type="binding site">
    <location>
        <position position="51"/>
    </location>
    <ligand>
        <name>coenzyme F420-(gamma-Glu)n</name>
        <dbReference type="ChEBI" id="CHEBI:133980"/>
    </ligand>
</feature>
<feature type="binding site">
    <location>
        <begin position="101"/>
        <end position="109"/>
    </location>
    <ligand>
        <name>coenzyme F420-(gamma-Glu)n</name>
        <dbReference type="ChEBI" id="CHEBI:133980"/>
    </ligand>
</feature>
<feature type="binding site" evidence="2 3 5">
    <location>
        <position position="228"/>
    </location>
    <ligand>
        <name>FAD</name>
        <dbReference type="ChEBI" id="CHEBI:57692"/>
    </ligand>
</feature>
<feature type="binding site">
    <location>
        <position position="232"/>
    </location>
    <ligand>
        <name>DNA</name>
        <dbReference type="ChEBI" id="CHEBI:16991"/>
    </ligand>
</feature>
<feature type="binding site" evidence="2 3 5">
    <location>
        <begin position="240"/>
        <end position="247"/>
    </location>
    <ligand>
        <name>FAD</name>
        <dbReference type="ChEBI" id="CHEBI:57692"/>
    </ligand>
</feature>
<feature type="binding site">
    <location>
        <position position="248"/>
    </location>
    <ligand>
        <name>coenzyme F420-(gamma-Glu)n</name>
        <dbReference type="ChEBI" id="CHEBI:133980"/>
    </ligand>
</feature>
<feature type="binding site" evidence="2 3 5">
    <location>
        <begin position="346"/>
        <end position="352"/>
    </location>
    <ligand>
        <name>FAD</name>
        <dbReference type="ChEBI" id="CHEBI:57692"/>
    </ligand>
</feature>
<feature type="binding site" evidence="2 3 5">
    <location>
        <begin position="380"/>
        <end position="382"/>
    </location>
    <ligand>
        <name>FAD</name>
        <dbReference type="ChEBI" id="CHEBI:57692"/>
    </ligand>
</feature>
<feature type="binding site" evidence="2 3 5">
    <location>
        <position position="386"/>
    </location>
    <ligand>
        <name>FAD</name>
        <dbReference type="ChEBI" id="CHEBI:57692"/>
    </ligand>
</feature>
<feature type="binding site">
    <location>
        <position position="411"/>
    </location>
    <ligand>
        <name>DNA</name>
        <dbReference type="ChEBI" id="CHEBI:16991"/>
    </ligand>
</feature>
<feature type="binding site">
    <location>
        <position position="472"/>
    </location>
    <ligand>
        <name>DNA</name>
        <dbReference type="ChEBI" id="CHEBI:16991"/>
    </ligand>
</feature>
<feature type="site" description="Electron transfer via tryptophanyl radical" evidence="1">
    <location>
        <position position="314"/>
    </location>
</feature>
<feature type="site" description="Electron transfer via tryptophanyl radical" evidence="1">
    <location>
        <position position="367"/>
    </location>
</feature>
<feature type="site" description="Electron transfer via tryptophanyl radical" evidence="1">
    <location>
        <position position="390"/>
    </location>
</feature>
<feature type="sequence conflict" description="In Ref. 1; CAA30190." evidence="6" ref="1">
    <original>R</original>
    <variation>Q</variation>
    <location>
        <position position="259"/>
    </location>
</feature>
<feature type="sequence conflict" description="In Ref. 1; CAA30190." evidence="6" ref="1">
    <original>W</original>
    <variation>R</variation>
    <location>
        <position position="352"/>
    </location>
</feature>
<feature type="sequence conflict" description="In Ref. 1; CAA30190." evidence="6" ref="1">
    <original>G</original>
    <variation>E</variation>
    <location>
        <position position="446"/>
    </location>
</feature>
<feature type="strand" evidence="7">
    <location>
        <begin position="5"/>
        <end position="8"/>
    </location>
</feature>
<feature type="strand" evidence="7">
    <location>
        <begin position="15"/>
        <end position="17"/>
    </location>
</feature>
<feature type="helix" evidence="7">
    <location>
        <begin position="19"/>
        <end position="27"/>
    </location>
</feature>
<feature type="strand" evidence="7">
    <location>
        <begin position="31"/>
        <end position="37"/>
    </location>
</feature>
<feature type="helix" evidence="7">
    <location>
        <begin position="39"/>
        <end position="42"/>
    </location>
</feature>
<feature type="helix" evidence="7">
    <location>
        <begin position="49"/>
        <end position="69"/>
    </location>
</feature>
<feature type="strand" evidence="7">
    <location>
        <begin position="73"/>
        <end position="78"/>
    </location>
</feature>
<feature type="helix" evidence="7">
    <location>
        <begin position="80"/>
        <end position="90"/>
    </location>
</feature>
<feature type="strand" evidence="7">
    <location>
        <begin position="94"/>
        <end position="99"/>
    </location>
</feature>
<feature type="helix" evidence="7">
    <location>
        <begin position="104"/>
        <end position="119"/>
    </location>
</feature>
<feature type="strand" evidence="7">
    <location>
        <begin position="123"/>
        <end position="127"/>
    </location>
</feature>
<feature type="strand" evidence="7">
    <location>
        <begin position="130"/>
        <end position="133"/>
    </location>
</feature>
<feature type="turn" evidence="7">
    <location>
        <begin position="135"/>
        <end position="137"/>
    </location>
</feature>
<feature type="helix" evidence="7">
    <location>
        <begin position="149"/>
        <end position="158"/>
    </location>
</feature>
<feature type="helix" evidence="7">
    <location>
        <begin position="176"/>
        <end position="182"/>
    </location>
</feature>
<feature type="helix" evidence="7">
    <location>
        <begin position="183"/>
        <end position="185"/>
    </location>
</feature>
<feature type="helix" evidence="7">
    <location>
        <begin position="194"/>
        <end position="196"/>
    </location>
</feature>
<feature type="helix" evidence="7">
    <location>
        <begin position="210"/>
        <end position="222"/>
    </location>
</feature>
<feature type="helix" evidence="7">
    <location>
        <begin position="224"/>
        <end position="227"/>
    </location>
</feature>
<feature type="helix" evidence="7">
    <location>
        <begin position="228"/>
        <end position="231"/>
    </location>
</feature>
<feature type="helix" evidence="7">
    <location>
        <begin position="244"/>
        <end position="248"/>
    </location>
</feature>
<feature type="helix" evidence="7">
    <location>
        <begin position="254"/>
        <end position="267"/>
    </location>
</feature>
<feature type="helix" evidence="7">
    <location>
        <begin position="271"/>
        <end position="296"/>
    </location>
</feature>
<feature type="helix" evidence="7">
    <location>
        <begin position="298"/>
        <end position="302"/>
    </location>
</feature>
<feature type="helix" evidence="7">
    <location>
        <begin position="308"/>
        <end position="311"/>
    </location>
</feature>
<feature type="helix" evidence="7">
    <location>
        <begin position="318"/>
        <end position="325"/>
    </location>
</feature>
<feature type="helix" evidence="7">
    <location>
        <begin position="332"/>
        <end position="344"/>
    </location>
</feature>
<feature type="helix" evidence="7">
    <location>
        <begin position="349"/>
        <end position="361"/>
    </location>
</feature>
<feature type="helix" evidence="7">
    <location>
        <begin position="368"/>
        <end position="375"/>
    </location>
</feature>
<feature type="helix" evidence="7">
    <location>
        <begin position="383"/>
        <end position="392"/>
    </location>
</feature>
<feature type="turn" evidence="7">
    <location>
        <begin position="393"/>
        <end position="395"/>
    </location>
</feature>
<feature type="strand" evidence="7">
    <location>
        <begin position="397"/>
        <end position="399"/>
    </location>
</feature>
<feature type="helix" evidence="7">
    <location>
        <begin position="408"/>
        <end position="415"/>
    </location>
</feature>
<feature type="helix" evidence="7">
    <location>
        <begin position="420"/>
        <end position="425"/>
    </location>
</feature>
<feature type="helix" evidence="7">
    <location>
        <begin position="427"/>
        <end position="429"/>
    </location>
</feature>
<feature type="helix" evidence="7">
    <location>
        <begin position="434"/>
        <end position="439"/>
    </location>
</feature>
<feature type="helix" evidence="7">
    <location>
        <begin position="444"/>
        <end position="447"/>
    </location>
</feature>
<feature type="helix" evidence="7">
    <location>
        <begin position="457"/>
        <end position="474"/>
    </location>
</feature>
<reference key="1">
    <citation type="journal article" date="1988" name="Nucleic Acids Res.">
        <title>Cloning and characterization of a photolyase gene from the cyanobacterium Anacystis nidulans.</title>
        <authorList>
            <person name="Yasui A."/>
            <person name="Takao M."/>
            <person name="Oikawa A."/>
            <person name="Kiener A."/>
            <person name="Walsh C.T."/>
            <person name="Eker A.P.M."/>
        </authorList>
    </citation>
    <scope>NUCLEOTIDE SEQUENCE [GENOMIC DNA]</scope>
</reference>
<reference key="2">
    <citation type="journal article" date="2007" name="Photosyn. Res.">
        <title>Complete nucleotide sequence of the freshwater unicellular cyanobacterium Synechococcus elongatus PCC 6301 chromosome: gene content and organization.</title>
        <authorList>
            <person name="Sugita C."/>
            <person name="Ogata K."/>
            <person name="Shikata M."/>
            <person name="Jikuya H."/>
            <person name="Takano J."/>
            <person name="Furumichi M."/>
            <person name="Kanehisa M."/>
            <person name="Omata T."/>
            <person name="Sugiura M."/>
            <person name="Sugita M."/>
        </authorList>
    </citation>
    <scope>NUCLEOTIDE SEQUENCE [LARGE SCALE GENOMIC DNA]</scope>
    <source>
        <strain>ATCC 27144 / PCC 6301 / SAUG 1402/1</strain>
    </source>
</reference>
<reference key="3">
    <citation type="journal article" date="1990" name="J. Biol. Chem.">
        <title>DNA photoreactivating enzyme from the cyanobacterium Anacystis nidulans.</title>
        <authorList>
            <person name="Eker A.P.M."/>
            <person name="Kooiman P."/>
            <person name="Hessels J.K.C."/>
            <person name="Yasui A."/>
        </authorList>
    </citation>
    <scope>PROTEIN SEQUENCE OF 2-26</scope>
</reference>
<reference key="4">
    <citation type="journal article" date="2005" name="Biochim. Biophys. Acta">
        <title>Light-driven enzymatic catalysis of DNA repair: a review of recent biophysical studies on photolyase.</title>
        <authorList>
            <person name="Weber S."/>
        </authorList>
    </citation>
    <scope>REVIEW</scope>
</reference>
<reference key="5">
    <citation type="journal article" date="1997" name="Nat. Struct. Biol.">
        <title>Crystal structure of DNA photolyase from Anacystis nidulans.</title>
        <authorList>
            <person name="Tamada T."/>
            <person name="Kitadokoro K."/>
            <person name="Higuchi Y."/>
            <person name="Inaka K."/>
            <person name="Yasui A."/>
            <person name="de Ruiter P.E."/>
            <person name="Eker A.P."/>
            <person name="Miki K."/>
        </authorList>
    </citation>
    <scope>X-RAY CRYSTALLOGRAPHY (1.8 ANGSTROMS) IN COMPLEX WITH FAD AND 8-HDF</scope>
</reference>
<reference key="6">
    <citation type="journal article" date="2004" name="Acta Crystallogr. D">
        <title>DNA apophotolyase from Anacystis nidulans: 1.8 A structure, 8-HDF reconstitution and X-ray-induced FAD reduction.</title>
        <authorList>
            <person name="Kort R."/>
            <person name="Komori H."/>
            <person name="Adachi S."/>
            <person name="Miki K."/>
            <person name="Eker A."/>
        </authorList>
    </citation>
    <scope>X-RAY CRYSTALLOGRAPHY (1.8 ANGSTROMS) IN COMPLEX WITH FAD</scope>
    <scope>SUBUNIT</scope>
</reference>
<reference key="7">
    <citation type="journal article" date="2004" name="Science">
        <title>Crystal structure of a photolyase bound to a CPD-like DNA lesion after in situ repair.</title>
        <authorList>
            <person name="Mees A."/>
            <person name="Klar T."/>
            <person name="Gnau P."/>
            <person name="Hennecke U."/>
            <person name="Eker A.P.M."/>
            <person name="Carell T."/>
            <person name="Essen L.-O."/>
        </authorList>
    </citation>
    <scope>X-RAY CRYSTALLOGRAPHY (1.8 ANGSTROMS) OF 1-475 IN COMPLEX WITH FAD; 8-HDF AND DAMAGED DNA</scope>
</reference>
<dbReference type="EC" id="4.1.99.3"/>
<dbReference type="EMBL" id="X07230">
    <property type="protein sequence ID" value="CAA30190.1"/>
    <property type="molecule type" value="Genomic_DNA"/>
</dbReference>
<dbReference type="EMBL" id="AP008231">
    <property type="protein sequence ID" value="BAD79582.1"/>
    <property type="molecule type" value="Genomic_DNA"/>
</dbReference>
<dbReference type="RefSeq" id="WP_011243704.1">
    <property type="nucleotide sequence ID" value="NC_006576.1"/>
</dbReference>
<dbReference type="PDB" id="1OWL">
    <property type="method" value="X-ray"/>
    <property type="resolution" value="1.80 A"/>
    <property type="chains" value="A=1-484"/>
</dbReference>
<dbReference type="PDB" id="1OWM">
    <property type="method" value="X-ray"/>
    <property type="resolution" value="2.30 A"/>
    <property type="chains" value="A=1-484"/>
</dbReference>
<dbReference type="PDB" id="1OWN">
    <property type="method" value="X-ray"/>
    <property type="resolution" value="2.30 A"/>
    <property type="chains" value="A=1-484"/>
</dbReference>
<dbReference type="PDB" id="1OWO">
    <property type="method" value="X-ray"/>
    <property type="resolution" value="2.30 A"/>
    <property type="chains" value="A=1-484"/>
</dbReference>
<dbReference type="PDB" id="1OWP">
    <property type="method" value="X-ray"/>
    <property type="resolution" value="2.30 A"/>
    <property type="chains" value="A=1-484"/>
</dbReference>
<dbReference type="PDB" id="1QNF">
    <property type="method" value="X-ray"/>
    <property type="resolution" value="1.80 A"/>
    <property type="chains" value="A=1-484"/>
</dbReference>
<dbReference type="PDB" id="1TEZ">
    <property type="method" value="X-ray"/>
    <property type="resolution" value="1.80 A"/>
    <property type="chains" value="A/B/C/D=2-475"/>
</dbReference>
<dbReference type="PDBsum" id="1OWL"/>
<dbReference type="PDBsum" id="1OWM"/>
<dbReference type="PDBsum" id="1OWN"/>
<dbReference type="PDBsum" id="1OWO"/>
<dbReference type="PDBsum" id="1OWP"/>
<dbReference type="PDBsum" id="1QNF"/>
<dbReference type="PDBsum" id="1TEZ"/>
<dbReference type="SMR" id="P05327"/>
<dbReference type="DrugBank" id="DB03147">
    <property type="generic name" value="Flavin adenine dinucleotide"/>
</dbReference>
<dbReference type="KEGG" id="syc:syc1392_c"/>
<dbReference type="eggNOG" id="COG0415">
    <property type="taxonomic scope" value="Bacteria"/>
</dbReference>
<dbReference type="BRENDA" id="4.1.99.3">
    <property type="organism ID" value="325"/>
</dbReference>
<dbReference type="EvolutionaryTrace" id="P05327"/>
<dbReference type="Proteomes" id="UP000001175">
    <property type="component" value="Chromosome"/>
</dbReference>
<dbReference type="GO" id="GO:0003904">
    <property type="term" value="F:deoxyribodipyrimidine photo-lyase activity"/>
    <property type="evidence" value="ECO:0007669"/>
    <property type="project" value="UniProtKB-EC"/>
</dbReference>
<dbReference type="GO" id="GO:0003677">
    <property type="term" value="F:DNA binding"/>
    <property type="evidence" value="ECO:0007669"/>
    <property type="project" value="UniProtKB-KW"/>
</dbReference>
<dbReference type="GO" id="GO:0071949">
    <property type="term" value="F:FAD binding"/>
    <property type="evidence" value="ECO:0007669"/>
    <property type="project" value="TreeGrafter"/>
</dbReference>
<dbReference type="GO" id="GO:0006281">
    <property type="term" value="P:DNA repair"/>
    <property type="evidence" value="ECO:0007669"/>
    <property type="project" value="UniProtKB-KW"/>
</dbReference>
<dbReference type="GO" id="GO:0009416">
    <property type="term" value="P:response to light stimulus"/>
    <property type="evidence" value="ECO:0007669"/>
    <property type="project" value="TreeGrafter"/>
</dbReference>
<dbReference type="Gene3D" id="1.25.40.80">
    <property type="match status" value="1"/>
</dbReference>
<dbReference type="Gene3D" id="1.10.579.10">
    <property type="entry name" value="DNA Cyclobutane Dipyrimidine Photolyase, subunit A, domain 3"/>
    <property type="match status" value="1"/>
</dbReference>
<dbReference type="Gene3D" id="3.40.50.620">
    <property type="entry name" value="HUPs"/>
    <property type="match status" value="1"/>
</dbReference>
<dbReference type="InterPro" id="IPR036134">
    <property type="entry name" value="Crypto/Photolyase_FAD-like_sf"/>
</dbReference>
<dbReference type="InterPro" id="IPR036155">
    <property type="entry name" value="Crypto/Photolyase_N_sf"/>
</dbReference>
<dbReference type="InterPro" id="IPR005101">
    <property type="entry name" value="Cryptochr/Photolyase_FAD-bd"/>
</dbReference>
<dbReference type="InterPro" id="IPR002081">
    <property type="entry name" value="Cryptochrome/DNA_photolyase_1"/>
</dbReference>
<dbReference type="InterPro" id="IPR018394">
    <property type="entry name" value="DNA_photolyase_1_CS_C"/>
</dbReference>
<dbReference type="InterPro" id="IPR006050">
    <property type="entry name" value="DNA_photolyase_N"/>
</dbReference>
<dbReference type="InterPro" id="IPR019947">
    <property type="entry name" value="Photolyase_8HDF"/>
</dbReference>
<dbReference type="InterPro" id="IPR014729">
    <property type="entry name" value="Rossmann-like_a/b/a_fold"/>
</dbReference>
<dbReference type="NCBIfam" id="TIGR03556">
    <property type="entry name" value="photolyase_8HDF"/>
    <property type="match status" value="1"/>
</dbReference>
<dbReference type="PANTHER" id="PTHR11455">
    <property type="entry name" value="CRYPTOCHROME"/>
    <property type="match status" value="1"/>
</dbReference>
<dbReference type="PANTHER" id="PTHR11455:SF9">
    <property type="entry name" value="CRYPTOCHROME CIRCADIAN CLOCK 5 ISOFORM X1"/>
    <property type="match status" value="1"/>
</dbReference>
<dbReference type="Pfam" id="PF00875">
    <property type="entry name" value="DNA_photolyase"/>
    <property type="match status" value="1"/>
</dbReference>
<dbReference type="Pfam" id="PF03441">
    <property type="entry name" value="FAD_binding_7"/>
    <property type="match status" value="1"/>
</dbReference>
<dbReference type="PRINTS" id="PR00147">
    <property type="entry name" value="DNAPHOTLYASE"/>
</dbReference>
<dbReference type="SUPFAM" id="SSF48173">
    <property type="entry name" value="Cryptochrome/photolyase FAD-binding domain"/>
    <property type="match status" value="1"/>
</dbReference>
<dbReference type="SUPFAM" id="SSF52425">
    <property type="entry name" value="Cryptochrome/photolyase, N-terminal domain"/>
    <property type="match status" value="1"/>
</dbReference>
<dbReference type="PROSITE" id="PS00394">
    <property type="entry name" value="DNA_PHOTOLYASES_1_1"/>
    <property type="match status" value="1"/>
</dbReference>
<dbReference type="PROSITE" id="PS51645">
    <property type="entry name" value="PHR_CRY_ALPHA_BETA"/>
    <property type="match status" value="1"/>
</dbReference>
<protein>
    <recommendedName>
        <fullName>Deoxyribodipyrimidine photo-lyase</fullName>
        <ecNumber>4.1.99.3</ecNumber>
    </recommendedName>
    <alternativeName>
        <fullName>DNA photolyase</fullName>
    </alternativeName>
    <alternativeName>
        <fullName>Photoreactivating enzyme</fullName>
    </alternativeName>
</protein>